<feature type="chain" id="PRO_0000445935" description="ADP-ribosylation factor-binding protein GGA3">
    <location>
        <begin position="1"/>
        <end position="727"/>
    </location>
</feature>
<feature type="domain" description="VHS" evidence="5">
    <location>
        <begin position="16"/>
        <end position="146"/>
    </location>
</feature>
<feature type="domain" description="GAT" evidence="6">
    <location>
        <begin position="171"/>
        <end position="298"/>
    </location>
</feature>
<feature type="domain" description="GAE" evidence="4">
    <location>
        <begin position="598"/>
        <end position="719"/>
    </location>
</feature>
<feature type="region of interest" description="Unstructured hinge" evidence="2">
    <location>
        <begin position="299"/>
        <end position="597"/>
    </location>
</feature>
<feature type="region of interest" description="Disordered" evidence="7">
    <location>
        <begin position="334"/>
        <end position="385"/>
    </location>
</feature>
<feature type="region of interest" description="Disordered" evidence="7">
    <location>
        <begin position="400"/>
        <end position="419"/>
    </location>
</feature>
<feature type="short sequence motif" description="DXXLL">
    <location>
        <begin position="391"/>
        <end position="395"/>
    </location>
</feature>
<feature type="compositionally biased region" description="Pro residues" evidence="7">
    <location>
        <begin position="343"/>
        <end position="363"/>
    </location>
</feature>
<feature type="compositionally biased region" description="Low complexity" evidence="7">
    <location>
        <begin position="364"/>
        <end position="374"/>
    </location>
</feature>
<feature type="modified residue" description="Phosphoserine" evidence="3">
    <location>
        <position position="159"/>
    </location>
</feature>
<feature type="modified residue" description="Phosphoserine" evidence="3">
    <location>
        <position position="275"/>
    </location>
</feature>
<feature type="mutagenesis site" description="Disrupts recycling of NTRK1 to the plasma membrane." evidence="8">
    <original>N</original>
    <variation>A</variation>
    <location>
        <position position="194"/>
    </location>
</feature>
<proteinExistence type="evidence at protein level"/>
<protein>
    <recommendedName>
        <fullName evidence="9">ADP-ribosylation factor-binding protein GGA3</fullName>
    </recommendedName>
    <alternativeName>
        <fullName>Golgi-localized, gamma ear-containing, ARF-binding protein 3</fullName>
    </alternativeName>
</protein>
<name>GGA3_RAT</name>
<gene>
    <name evidence="10" type="primary">Gga3</name>
</gene>
<evidence type="ECO:0000250" key="1"/>
<evidence type="ECO:0000250" key="2">
    <source>
        <dbReference type="UniProtKB" id="Q8BMI3"/>
    </source>
</evidence>
<evidence type="ECO:0000250" key="3">
    <source>
        <dbReference type="UniProtKB" id="Q9NZ52"/>
    </source>
</evidence>
<evidence type="ECO:0000255" key="4">
    <source>
        <dbReference type="PROSITE-ProRule" id="PRU00093"/>
    </source>
</evidence>
<evidence type="ECO:0000255" key="5">
    <source>
        <dbReference type="PROSITE-ProRule" id="PRU00218"/>
    </source>
</evidence>
<evidence type="ECO:0000255" key="6">
    <source>
        <dbReference type="PROSITE-ProRule" id="PRU00373"/>
    </source>
</evidence>
<evidence type="ECO:0000256" key="7">
    <source>
        <dbReference type="SAM" id="MobiDB-lite"/>
    </source>
</evidence>
<evidence type="ECO:0000269" key="8">
    <source>
    </source>
</evidence>
<evidence type="ECO:0000305" key="9"/>
<evidence type="ECO:0000312" key="10">
    <source>
        <dbReference type="RGD" id="1309553"/>
    </source>
</evidence>
<comment type="function">
    <text evidence="3 8">Plays a role in protein sorting and trafficking between the trans-Golgi network (TGN) and endosomes. Mediates the ARF-dependent recruitment of clathrin to the TGN and binds ubiquitinated proteins and membrane cargo molecules with a cytosolic acidic cluster-dileucine (DXXLL) motif. Mediates export of the GPCR receptor ADRA2B to the cell surface. Involved in BACE1 transport and sorting as well as regulation of BACE1 protein levels. Regulates retrograde transport of BACE1 from endosomes to the trans-Golgi network via interaction through the VHS motif and dependent of BACE1 phosphorylation. Modulates BACE1 protein levels independently of the interaction between VHS domain and DXXLL motif through recognition of ubiquitination (By similarity). Key player in a novel DXXLL-mediated endosomal sorting machinery to the recycling pathway that targets NTRK1 to the plasma membrane (PubMed:26446845).</text>
</comment>
<comment type="subunit">
    <text evidence="3 8">Monomer. Interacts with GGA1 and GGA2. Binds to clathrin and activated ARFs, such as ARF1, ARF5 and ARF6. Binds RABEP1 and RABGEF1. Interacts with the membrane proteins M6PR/CD-MPR and IGF2R/CI-MPR and the accessory proteins SYNRG, EPN4, NECAP1, NECAP2 and AFTPH/aftiphilin. Interacts with TSG101 and UBC. Interacts with ADRA2B (By similarity). Interacts with NTRK1; the interaction is independent of NTRK1 activation and ubiquitination (PubMed:26446845). Interacts (via VHS domain) with BACE1 (via DXXLL motif) (By similarity).</text>
</comment>
<comment type="subcellular location">
    <subcellularLocation>
        <location evidence="3">Golgi apparatus</location>
        <location evidence="3">trans-Golgi network membrane</location>
        <topology evidence="3">Peripheral membrane protein</topology>
    </subcellularLocation>
    <subcellularLocation>
        <location evidence="3">Endosome membrane</location>
        <topology evidence="3">Peripheral membrane protein</topology>
    </subcellularLocation>
    <subcellularLocation>
        <location evidence="8">Early endosome membrane</location>
        <topology evidence="9">Peripheral membrane protein</topology>
    </subcellularLocation>
    <subcellularLocation>
        <location evidence="8">Recycling endosome membrane</location>
        <topology evidence="9">Peripheral membrane protein</topology>
    </subcellularLocation>
</comment>
<comment type="domain">
    <text evidence="3">The VHS domain functions as a recognition module for sorting signals composed of an acidic cluster followed by two leucines (DXXLL motif).</text>
</comment>
<comment type="domain">
    <text evidence="3">The GAT domain is responsible for interaction with ARF-GTP, UBC and RABEP1. Required for recruitment to the TGN it prevents ARF-GTP hydrolysis.</text>
</comment>
<comment type="domain">
    <text evidence="3">The unstructured hinge region contains clathrin-binding and an autoinhibitory (DXXLL) motifs.</text>
</comment>
<comment type="domain">
    <text evidence="3">The GAE domain binds accessory proteins regulating GGAs function.</text>
</comment>
<comment type="PTM">
    <text evidence="1">Phosphorylated by CK2 and dephosphorylated by PP2A (By similarity). Phosphorylation of GGA3 allows the internal DXXLL motif to bind the VHS domain and to inhibit the recognition of cargo signals.</text>
</comment>
<comment type="PTM">
    <text evidence="3">Ubiquitinated.</text>
</comment>
<comment type="PTM">
    <text evidence="3">Proteolytically cleaved during apoptosis by CASP3.</text>
</comment>
<comment type="similarity">
    <text evidence="9">Belongs to the GGA protein family.</text>
</comment>
<keyword id="KW-0967">Endosome</keyword>
<keyword id="KW-0333">Golgi apparatus</keyword>
<keyword id="KW-0472">Membrane</keyword>
<keyword id="KW-0597">Phosphoprotein</keyword>
<keyword id="KW-0653">Protein transport</keyword>
<keyword id="KW-1185">Reference proteome</keyword>
<keyword id="KW-0813">Transport</keyword>
<keyword id="KW-0832">Ubl conjugation</keyword>
<dbReference type="EMBL" id="AABR07030782">
    <property type="status" value="NOT_ANNOTATED_CDS"/>
    <property type="molecule type" value="Genomic_DNA"/>
</dbReference>
<dbReference type="RefSeq" id="NP_001402615.1">
    <property type="nucleotide sequence ID" value="NM_001415686.1"/>
</dbReference>
<dbReference type="RefSeq" id="XP_006247781.1">
    <property type="nucleotide sequence ID" value="XM_006247719.3"/>
</dbReference>
<dbReference type="SMR" id="A0A0G2JV04"/>
<dbReference type="CORUM" id="A0A0G2JV04"/>
<dbReference type="FunCoup" id="A0A0G2JV04">
    <property type="interactions" value="3377"/>
</dbReference>
<dbReference type="STRING" id="10116.ENSRNOP00000069301"/>
<dbReference type="GlyGen" id="A0A0G2JV04">
    <property type="glycosylation" value="2 sites"/>
</dbReference>
<dbReference type="iPTMnet" id="A0A0G2JV04"/>
<dbReference type="PhosphoSitePlus" id="A0A0G2JV04"/>
<dbReference type="jPOST" id="A0A0G2JV04"/>
<dbReference type="PaxDb" id="10116-ENSRNOP00000060463"/>
<dbReference type="Ensembl" id="ENSRNOT00000114183.1">
    <property type="protein sequence ID" value="ENSRNOP00000090243.1"/>
    <property type="gene ID" value="ENSRNOG00000027057.7"/>
</dbReference>
<dbReference type="GeneID" id="360658"/>
<dbReference type="AGR" id="RGD:1309553"/>
<dbReference type="RGD" id="1309553">
    <property type="gene designation" value="Gga3"/>
</dbReference>
<dbReference type="GeneTree" id="ENSGT00940000157333"/>
<dbReference type="InParanoid" id="A0A0G2JV04"/>
<dbReference type="OMA" id="CGDDFQD"/>
<dbReference type="PhylomeDB" id="A0A0G2JV04"/>
<dbReference type="Reactome" id="R-RNO-8875656">
    <property type="pathway name" value="MET receptor recycling"/>
</dbReference>
<dbReference type="PRO" id="PR:A0A0G2JV04"/>
<dbReference type="Proteomes" id="UP000002494">
    <property type="component" value="Chromosome 10"/>
</dbReference>
<dbReference type="Bgee" id="ENSRNOG00000027057">
    <property type="expression patterns" value="Expressed in spleen and 20 other cell types or tissues"/>
</dbReference>
<dbReference type="ExpressionAtlas" id="A0A0G2JV04">
    <property type="expression patterns" value="baseline and differential"/>
</dbReference>
<dbReference type="GO" id="GO:0005769">
    <property type="term" value="C:early endosome"/>
    <property type="evidence" value="ECO:0000314"/>
    <property type="project" value="UniProtKB"/>
</dbReference>
<dbReference type="GO" id="GO:0031901">
    <property type="term" value="C:early endosome membrane"/>
    <property type="evidence" value="ECO:0007669"/>
    <property type="project" value="UniProtKB-SubCell"/>
</dbReference>
<dbReference type="GO" id="GO:0005764">
    <property type="term" value="C:lysosome"/>
    <property type="evidence" value="ECO:0000266"/>
    <property type="project" value="RGD"/>
</dbReference>
<dbReference type="GO" id="GO:0032991">
    <property type="term" value="C:protein-containing complex"/>
    <property type="evidence" value="ECO:0000266"/>
    <property type="project" value="RGD"/>
</dbReference>
<dbReference type="GO" id="GO:0055037">
    <property type="term" value="C:recycling endosome"/>
    <property type="evidence" value="ECO:0000314"/>
    <property type="project" value="UniProtKB"/>
</dbReference>
<dbReference type="GO" id="GO:0055038">
    <property type="term" value="C:recycling endosome membrane"/>
    <property type="evidence" value="ECO:0007669"/>
    <property type="project" value="UniProtKB-SubCell"/>
</dbReference>
<dbReference type="GO" id="GO:0005802">
    <property type="term" value="C:trans-Golgi network"/>
    <property type="evidence" value="ECO:0000266"/>
    <property type="project" value="RGD"/>
</dbReference>
<dbReference type="GO" id="GO:0035091">
    <property type="term" value="F:phosphatidylinositol binding"/>
    <property type="evidence" value="ECO:0007669"/>
    <property type="project" value="InterPro"/>
</dbReference>
<dbReference type="GO" id="GO:0140318">
    <property type="term" value="F:protein transporter activity"/>
    <property type="evidence" value="ECO:0000266"/>
    <property type="project" value="RGD"/>
</dbReference>
<dbReference type="GO" id="GO:0044877">
    <property type="term" value="F:protein-containing complex binding"/>
    <property type="evidence" value="ECO:0000266"/>
    <property type="project" value="RGD"/>
</dbReference>
<dbReference type="GO" id="GO:0031267">
    <property type="term" value="F:small GTPase binding"/>
    <property type="evidence" value="ECO:0000266"/>
    <property type="project" value="RGD"/>
</dbReference>
<dbReference type="GO" id="GO:0043130">
    <property type="term" value="F:ubiquitin binding"/>
    <property type="evidence" value="ECO:0000266"/>
    <property type="project" value="RGD"/>
</dbReference>
<dbReference type="GO" id="GO:0032456">
    <property type="term" value="P:endocytic recycling"/>
    <property type="evidence" value="ECO:0000314"/>
    <property type="project" value="UniProtKB"/>
</dbReference>
<dbReference type="GO" id="GO:0043001">
    <property type="term" value="P:Golgi to plasma membrane protein transport"/>
    <property type="evidence" value="ECO:0000266"/>
    <property type="project" value="RGD"/>
</dbReference>
<dbReference type="GO" id="GO:0006893">
    <property type="term" value="P:Golgi to plasma membrane transport"/>
    <property type="evidence" value="ECO:0000318"/>
    <property type="project" value="GO_Central"/>
</dbReference>
<dbReference type="GO" id="GO:1902430">
    <property type="term" value="P:negative regulation of amyloid-beta formation"/>
    <property type="evidence" value="ECO:0000266"/>
    <property type="project" value="RGD"/>
</dbReference>
<dbReference type="GO" id="GO:0045732">
    <property type="term" value="P:positive regulation of protein catabolic process"/>
    <property type="evidence" value="ECO:0000266"/>
    <property type="project" value="RGD"/>
</dbReference>
<dbReference type="GO" id="GO:0030163">
    <property type="term" value="P:protein catabolic process"/>
    <property type="evidence" value="ECO:0000266"/>
    <property type="project" value="RGD"/>
</dbReference>
<dbReference type="GO" id="GO:0031648">
    <property type="term" value="P:protein destabilization"/>
    <property type="evidence" value="ECO:0000266"/>
    <property type="project" value="RGD"/>
</dbReference>
<dbReference type="GO" id="GO:0034394">
    <property type="term" value="P:protein localization to cell surface"/>
    <property type="evidence" value="ECO:0000266"/>
    <property type="project" value="RGD"/>
</dbReference>
<dbReference type="GO" id="GO:0061462">
    <property type="term" value="P:protein localization to lysosome"/>
    <property type="evidence" value="ECO:0000266"/>
    <property type="project" value="RGD"/>
</dbReference>
<dbReference type="GO" id="GO:0006622">
    <property type="term" value="P:protein targeting to lysosome"/>
    <property type="evidence" value="ECO:0000266"/>
    <property type="project" value="RGD"/>
</dbReference>
<dbReference type="GO" id="GO:0031647">
    <property type="term" value="P:regulation of protein stability"/>
    <property type="evidence" value="ECO:0000266"/>
    <property type="project" value="RGD"/>
</dbReference>
<dbReference type="CDD" id="cd14240">
    <property type="entry name" value="GAT_GGA3"/>
    <property type="match status" value="1"/>
</dbReference>
<dbReference type="CDD" id="cd17008">
    <property type="entry name" value="VHS_GGA3"/>
    <property type="match status" value="1"/>
</dbReference>
<dbReference type="FunFam" id="2.60.40.1230:FF:000001">
    <property type="entry name" value="ADP-ribosylation factor-binding protein GGA1 isoform 1"/>
    <property type="match status" value="1"/>
</dbReference>
<dbReference type="FunFam" id="1.20.5.170:FF:000023">
    <property type="entry name" value="ADP-ribosylation factor-binding protein GGA3 isoform X1"/>
    <property type="match status" value="1"/>
</dbReference>
<dbReference type="FunFam" id="1.25.40.90:FF:000011">
    <property type="entry name" value="ADP-ribosylation factor-binding protein GGA3 isoform X1"/>
    <property type="match status" value="1"/>
</dbReference>
<dbReference type="Gene3D" id="1.20.5.170">
    <property type="match status" value="1"/>
</dbReference>
<dbReference type="Gene3D" id="1.20.58.160">
    <property type="match status" value="1"/>
</dbReference>
<dbReference type="Gene3D" id="1.25.40.90">
    <property type="match status" value="1"/>
</dbReference>
<dbReference type="Gene3D" id="2.60.40.1230">
    <property type="match status" value="1"/>
</dbReference>
<dbReference type="InterPro" id="IPR008152">
    <property type="entry name" value="Clathrin_a/b/g-adaptin_app_Ig"/>
</dbReference>
<dbReference type="InterPro" id="IPR013041">
    <property type="entry name" value="Clathrin_app_Ig-like_sf"/>
</dbReference>
<dbReference type="InterPro" id="IPR008942">
    <property type="entry name" value="ENTH_VHS"/>
</dbReference>
<dbReference type="InterPro" id="IPR008153">
    <property type="entry name" value="GAE_dom"/>
</dbReference>
<dbReference type="InterPro" id="IPR004152">
    <property type="entry name" value="GAT_dom"/>
</dbReference>
<dbReference type="InterPro" id="IPR044111">
    <property type="entry name" value="GAT_GGA3"/>
</dbReference>
<dbReference type="InterPro" id="IPR038425">
    <property type="entry name" value="GAT_sf"/>
</dbReference>
<dbReference type="InterPro" id="IPR027422">
    <property type="entry name" value="GGA1-3"/>
</dbReference>
<dbReference type="InterPro" id="IPR041198">
    <property type="entry name" value="GGA_N-GAT"/>
</dbReference>
<dbReference type="InterPro" id="IPR002014">
    <property type="entry name" value="VHS_dom"/>
</dbReference>
<dbReference type="InterPro" id="IPR046996">
    <property type="entry name" value="VHS_GGA3"/>
</dbReference>
<dbReference type="PANTHER" id="PTHR45905:SF3">
    <property type="entry name" value="ADP-RIBOSYLATION FACTOR-BINDING PROTEIN GGA3"/>
    <property type="match status" value="1"/>
</dbReference>
<dbReference type="PANTHER" id="PTHR45905">
    <property type="entry name" value="GOLGI-LOCALIZED, GAMMA-ADAPTIN EAR CONTAINING, ARF BINDING PROTEIN"/>
    <property type="match status" value="1"/>
</dbReference>
<dbReference type="Pfam" id="PF02883">
    <property type="entry name" value="Alpha_adaptinC2"/>
    <property type="match status" value="1"/>
</dbReference>
<dbReference type="Pfam" id="PF03127">
    <property type="entry name" value="GAT"/>
    <property type="match status" value="1"/>
</dbReference>
<dbReference type="Pfam" id="PF18308">
    <property type="entry name" value="GGA_N-GAT"/>
    <property type="match status" value="1"/>
</dbReference>
<dbReference type="Pfam" id="PF00790">
    <property type="entry name" value="VHS"/>
    <property type="match status" value="1"/>
</dbReference>
<dbReference type="SMART" id="SM00809">
    <property type="entry name" value="Alpha_adaptinC2"/>
    <property type="match status" value="1"/>
</dbReference>
<dbReference type="SMART" id="SM00288">
    <property type="entry name" value="VHS"/>
    <property type="match status" value="1"/>
</dbReference>
<dbReference type="SUPFAM" id="SSF49348">
    <property type="entry name" value="Clathrin adaptor appendage domain"/>
    <property type="match status" value="1"/>
</dbReference>
<dbReference type="SUPFAM" id="SSF48464">
    <property type="entry name" value="ENTH/VHS domain"/>
    <property type="match status" value="1"/>
</dbReference>
<dbReference type="SUPFAM" id="SSF89009">
    <property type="entry name" value="GAT-like domain"/>
    <property type="match status" value="1"/>
</dbReference>
<dbReference type="PROSITE" id="PS50180">
    <property type="entry name" value="GAE"/>
    <property type="match status" value="1"/>
</dbReference>
<dbReference type="PROSITE" id="PS50909">
    <property type="entry name" value="GAT"/>
    <property type="match status" value="1"/>
</dbReference>
<dbReference type="PROSITE" id="PS50179">
    <property type="entry name" value="VHS"/>
    <property type="match status" value="1"/>
</dbReference>
<accession>A0A0G2JV04</accession>
<sequence>MAEAEGESLESWLNKATNPSNRQEDWEYIIGFCDQINKELEGPQIAVRLLAHKIQSPQEWEAVQALTVLEACMKNCGRRLHNEVGKFRFLNELIKVVSPKYLGDRVSEKVKAKVIELLFSWTLALPEEAKIKDAYHMLKRQGIVQSDPPIPMDRTLIPSPPPRPKNPVFDDEEKSKLLAKLLRSKNPDDLQEANQLIKSMVKEDEARIQKVTKRLHTLEEVNNNVKLLHEMLLHYSQEFSSEADKELMKELFDRCENKRRTLFKLASETEDNDNSLGDILQASDNLSRVINSYKTIIEGQIINGEVTTSTVPDSEGNSHCGNQGALIDLAELDTPSSSSPVLAPAPAPPTSGIPILPPPPQTSGPPRSRSSSQAEAPSGPDSTNNALSLLDEELLCLGLSDPAPTAPKESAGNSPWHLFQNEPSSDLDFFSPRLVSAASCPSEGSLLPPPVSTSSLSQAPLPAAFPAPVVPASAVTHSTGSFTFSSGPAPALVPKAEPEGPEYPSSSISHRLDALDQLLEEAKVTSGLVKPVSCFSPGPTASPLLPASTPARPLLPFSTGPGSPLFQSPAFQSQGSPQKGPELSLASVHVPLESIKPSSALPVTAYDKNGFRILFHFAKECPPGRPDVLVVVVSMLNTAPLPVKSIVLQAAVPKSMKVKLQPPSGTELSPFSPIQPPAAITQVMLLANPMKEKVRLRYKLTFALGEQLSTELGEVDQFPPVEQWGNL</sequence>
<organism>
    <name type="scientific">Rattus norvegicus</name>
    <name type="common">Rat</name>
    <dbReference type="NCBI Taxonomy" id="10116"/>
    <lineage>
        <taxon>Eukaryota</taxon>
        <taxon>Metazoa</taxon>
        <taxon>Chordata</taxon>
        <taxon>Craniata</taxon>
        <taxon>Vertebrata</taxon>
        <taxon>Euteleostomi</taxon>
        <taxon>Mammalia</taxon>
        <taxon>Eutheria</taxon>
        <taxon>Euarchontoglires</taxon>
        <taxon>Glires</taxon>
        <taxon>Rodentia</taxon>
        <taxon>Myomorpha</taxon>
        <taxon>Muroidea</taxon>
        <taxon>Muridae</taxon>
        <taxon>Murinae</taxon>
        <taxon>Rattus</taxon>
    </lineage>
</organism>
<reference key="1">
    <citation type="journal article" date="2004" name="Nature">
        <title>Genome sequence of the Brown Norway rat yields insights into mammalian evolution.</title>
        <authorList>
            <person name="Gibbs R.A."/>
            <person name="Weinstock G.M."/>
            <person name="Metzker M.L."/>
            <person name="Muzny D.M."/>
            <person name="Sodergren E.J."/>
            <person name="Scherer S."/>
            <person name="Scott G."/>
            <person name="Steffen D."/>
            <person name="Worley K.C."/>
            <person name="Burch P.E."/>
            <person name="Okwuonu G."/>
            <person name="Hines S."/>
            <person name="Lewis L."/>
            <person name="Deramo C."/>
            <person name="Delgado O."/>
            <person name="Dugan-Rocha S."/>
            <person name="Miner G."/>
            <person name="Morgan M."/>
            <person name="Hawes A."/>
            <person name="Gill R."/>
            <person name="Holt R.A."/>
            <person name="Adams M.D."/>
            <person name="Amanatides P.G."/>
            <person name="Baden-Tillson H."/>
            <person name="Barnstead M."/>
            <person name="Chin S."/>
            <person name="Evans C.A."/>
            <person name="Ferriera S."/>
            <person name="Fosler C."/>
            <person name="Glodek A."/>
            <person name="Gu Z."/>
            <person name="Jennings D."/>
            <person name="Kraft C.L."/>
            <person name="Nguyen T."/>
            <person name="Pfannkoch C.M."/>
            <person name="Sitter C."/>
            <person name="Sutton G.G."/>
            <person name="Venter J.C."/>
            <person name="Woodage T."/>
            <person name="Smith D."/>
            <person name="Lee H.-M."/>
            <person name="Gustafson E."/>
            <person name="Cahill P."/>
            <person name="Kana A."/>
            <person name="Doucette-Stamm L."/>
            <person name="Weinstock K."/>
            <person name="Fechtel K."/>
            <person name="Weiss R.B."/>
            <person name="Dunn D.M."/>
            <person name="Green E.D."/>
            <person name="Blakesley R.W."/>
            <person name="Bouffard G.G."/>
            <person name="De Jong P.J."/>
            <person name="Osoegawa K."/>
            <person name="Zhu B."/>
            <person name="Marra M."/>
            <person name="Schein J."/>
            <person name="Bosdet I."/>
            <person name="Fjell C."/>
            <person name="Jones S."/>
            <person name="Krzywinski M."/>
            <person name="Mathewson C."/>
            <person name="Siddiqui A."/>
            <person name="Wye N."/>
            <person name="McPherson J."/>
            <person name="Zhao S."/>
            <person name="Fraser C.M."/>
            <person name="Shetty J."/>
            <person name="Shatsman S."/>
            <person name="Geer K."/>
            <person name="Chen Y."/>
            <person name="Abramzon S."/>
            <person name="Nierman W.C."/>
            <person name="Havlak P.H."/>
            <person name="Chen R."/>
            <person name="Durbin K.J."/>
            <person name="Egan A."/>
            <person name="Ren Y."/>
            <person name="Song X.-Z."/>
            <person name="Li B."/>
            <person name="Liu Y."/>
            <person name="Qin X."/>
            <person name="Cawley S."/>
            <person name="Cooney A.J."/>
            <person name="D'Souza L.M."/>
            <person name="Martin K."/>
            <person name="Wu J.Q."/>
            <person name="Gonzalez-Garay M.L."/>
            <person name="Jackson A.R."/>
            <person name="Kalafus K.J."/>
            <person name="McLeod M.P."/>
            <person name="Milosavljevic A."/>
            <person name="Virk D."/>
            <person name="Volkov A."/>
            <person name="Wheeler D.A."/>
            <person name="Zhang Z."/>
            <person name="Bailey J.A."/>
            <person name="Eichler E.E."/>
            <person name="Tuzun E."/>
            <person name="Birney E."/>
            <person name="Mongin E."/>
            <person name="Ureta-Vidal A."/>
            <person name="Woodwark C."/>
            <person name="Zdobnov E."/>
            <person name="Bork P."/>
            <person name="Suyama M."/>
            <person name="Torrents D."/>
            <person name="Alexandersson M."/>
            <person name="Trask B.J."/>
            <person name="Young J.M."/>
            <person name="Huang H."/>
            <person name="Wang H."/>
            <person name="Xing H."/>
            <person name="Daniels S."/>
            <person name="Gietzen D."/>
            <person name="Schmidt J."/>
            <person name="Stevens K."/>
            <person name="Vitt U."/>
            <person name="Wingrove J."/>
            <person name="Camara F."/>
            <person name="Mar Alba M."/>
            <person name="Abril J.F."/>
            <person name="Guigo R."/>
            <person name="Smit A."/>
            <person name="Dubchak I."/>
            <person name="Rubin E.M."/>
            <person name="Couronne O."/>
            <person name="Poliakov A."/>
            <person name="Huebner N."/>
            <person name="Ganten D."/>
            <person name="Goesele C."/>
            <person name="Hummel O."/>
            <person name="Kreitler T."/>
            <person name="Lee Y.-A."/>
            <person name="Monti J."/>
            <person name="Schulz H."/>
            <person name="Zimdahl H."/>
            <person name="Himmelbauer H."/>
            <person name="Lehrach H."/>
            <person name="Jacob H.J."/>
            <person name="Bromberg S."/>
            <person name="Gullings-Handley J."/>
            <person name="Jensen-Seaman M.I."/>
            <person name="Kwitek A.E."/>
            <person name="Lazar J."/>
            <person name="Pasko D."/>
            <person name="Tonellato P.J."/>
            <person name="Twigger S."/>
            <person name="Ponting C.P."/>
            <person name="Duarte J.M."/>
            <person name="Rice S."/>
            <person name="Goodstadt L."/>
            <person name="Beatson S.A."/>
            <person name="Emes R.D."/>
            <person name="Winter E.E."/>
            <person name="Webber C."/>
            <person name="Brandt P."/>
            <person name="Nyakatura G."/>
            <person name="Adetobi M."/>
            <person name="Chiaromonte F."/>
            <person name="Elnitski L."/>
            <person name="Eswara P."/>
            <person name="Hardison R.C."/>
            <person name="Hou M."/>
            <person name="Kolbe D."/>
            <person name="Makova K."/>
            <person name="Miller W."/>
            <person name="Nekrutenko A."/>
            <person name="Riemer C."/>
            <person name="Schwartz S."/>
            <person name="Taylor J."/>
            <person name="Yang S."/>
            <person name="Zhang Y."/>
            <person name="Lindpaintner K."/>
            <person name="Andrews T.D."/>
            <person name="Caccamo M."/>
            <person name="Clamp M."/>
            <person name="Clarke L."/>
            <person name="Curwen V."/>
            <person name="Durbin R.M."/>
            <person name="Eyras E."/>
            <person name="Searle S.M."/>
            <person name="Cooper G.M."/>
            <person name="Batzoglou S."/>
            <person name="Brudno M."/>
            <person name="Sidow A."/>
            <person name="Stone E.A."/>
            <person name="Payseur B.A."/>
            <person name="Bourque G."/>
            <person name="Lopez-Otin C."/>
            <person name="Puente X.S."/>
            <person name="Chakrabarti K."/>
            <person name="Chatterji S."/>
            <person name="Dewey C."/>
            <person name="Pachter L."/>
            <person name="Bray N."/>
            <person name="Yap V.B."/>
            <person name="Caspi A."/>
            <person name="Tesler G."/>
            <person name="Pevzner P.A."/>
            <person name="Haussler D."/>
            <person name="Roskin K.M."/>
            <person name="Baertsch R."/>
            <person name="Clawson H."/>
            <person name="Furey T.S."/>
            <person name="Hinrichs A.S."/>
            <person name="Karolchik D."/>
            <person name="Kent W.J."/>
            <person name="Rosenbloom K.R."/>
            <person name="Trumbower H."/>
            <person name="Weirauch M."/>
            <person name="Cooper D.N."/>
            <person name="Stenson P.D."/>
            <person name="Ma B."/>
            <person name="Brent M."/>
            <person name="Arumugam M."/>
            <person name="Shteynberg D."/>
            <person name="Copley R.R."/>
            <person name="Taylor M.S."/>
            <person name="Riethman H."/>
            <person name="Mudunuri U."/>
            <person name="Peterson J."/>
            <person name="Guyer M."/>
            <person name="Felsenfeld A."/>
            <person name="Old S."/>
            <person name="Mockrin S."/>
            <person name="Collins F.S."/>
        </authorList>
    </citation>
    <scope>NUCLEOTIDE SEQUENCE [LARGE SCALE GENOMIC DNA]</scope>
    <source>
        <strain>Brown Norway</strain>
    </source>
</reference>
<reference key="2">
    <citation type="journal article" date="2012" name="Nat. Commun.">
        <title>Quantitative maps of protein phosphorylation sites across 14 different rat organs and tissues.</title>
        <authorList>
            <person name="Lundby A."/>
            <person name="Secher A."/>
            <person name="Lage K."/>
            <person name="Nordsborg N.B."/>
            <person name="Dmytriyev A."/>
            <person name="Lundby C."/>
            <person name="Olsen J.V."/>
        </authorList>
    </citation>
    <scope>IDENTIFICATION BY MASS SPECTROMETRY [LARGE SCALE ANALYSIS]</scope>
</reference>
<reference key="3">
    <citation type="journal article" date="2015" name="Mol. Biol. Cell">
        <title>GGA3 mediates TrkA endocytic recycling to promote sustained Akt phosphorylation and cell survival.</title>
        <authorList>
            <person name="Li X."/>
            <person name="Lavigne P."/>
            <person name="Lavoie C."/>
        </authorList>
    </citation>
    <scope>FUNCTION</scope>
    <scope>INTERACTION WITH NTRK1</scope>
    <scope>SUBCELLULAR LOCATION</scope>
    <scope>MUTAGENESIS OF ASN-194</scope>
</reference>